<gene>
    <name type="primary">rps8</name>
</gene>
<evidence type="ECO:0000250" key="1"/>
<evidence type="ECO:0000305" key="2"/>
<proteinExistence type="inferred from homology"/>
<keyword id="KW-0150">Chloroplast</keyword>
<keyword id="KW-0934">Plastid</keyword>
<keyword id="KW-0687">Ribonucleoprotein</keyword>
<keyword id="KW-0689">Ribosomal protein</keyword>
<keyword id="KW-0694">RNA-binding</keyword>
<keyword id="KW-0699">rRNA-binding</keyword>
<sequence>MGNDTIGSMITCIRNGNLSKAKTVEVPATQITRSIANILLQEGYIANVRERQYNAIRMLVITLKYQTKTRKPHITIIKYISKPGLRVYSNHQDIPQFLGEMGIVILSTSKGIMMHREARAQKVGGEVLCYVW</sequence>
<dbReference type="EMBL" id="AY958086">
    <property type="protein sequence ID" value="AAX45876.1"/>
    <property type="molecule type" value="Genomic_DNA"/>
</dbReference>
<dbReference type="RefSeq" id="YP_636494.1">
    <property type="nucleotide sequence ID" value="NC_008117.1"/>
</dbReference>
<dbReference type="SMR" id="Q32RN2"/>
<dbReference type="GeneID" id="4108196"/>
<dbReference type="GO" id="GO:0009507">
    <property type="term" value="C:chloroplast"/>
    <property type="evidence" value="ECO:0007669"/>
    <property type="project" value="UniProtKB-SubCell"/>
</dbReference>
<dbReference type="GO" id="GO:1990904">
    <property type="term" value="C:ribonucleoprotein complex"/>
    <property type="evidence" value="ECO:0007669"/>
    <property type="project" value="UniProtKB-KW"/>
</dbReference>
<dbReference type="GO" id="GO:0005840">
    <property type="term" value="C:ribosome"/>
    <property type="evidence" value="ECO:0007669"/>
    <property type="project" value="UniProtKB-KW"/>
</dbReference>
<dbReference type="GO" id="GO:0019843">
    <property type="term" value="F:rRNA binding"/>
    <property type="evidence" value="ECO:0007669"/>
    <property type="project" value="UniProtKB-UniRule"/>
</dbReference>
<dbReference type="GO" id="GO:0003735">
    <property type="term" value="F:structural constituent of ribosome"/>
    <property type="evidence" value="ECO:0007669"/>
    <property type="project" value="InterPro"/>
</dbReference>
<dbReference type="GO" id="GO:0006412">
    <property type="term" value="P:translation"/>
    <property type="evidence" value="ECO:0007669"/>
    <property type="project" value="UniProtKB-UniRule"/>
</dbReference>
<dbReference type="FunFam" id="3.30.1490.10:FF:000001">
    <property type="entry name" value="30S ribosomal protein S8"/>
    <property type="match status" value="1"/>
</dbReference>
<dbReference type="Gene3D" id="3.30.1370.30">
    <property type="match status" value="1"/>
</dbReference>
<dbReference type="Gene3D" id="3.30.1490.10">
    <property type="match status" value="1"/>
</dbReference>
<dbReference type="HAMAP" id="MF_01302_B">
    <property type="entry name" value="Ribosomal_uS8_B"/>
    <property type="match status" value="1"/>
</dbReference>
<dbReference type="InterPro" id="IPR000630">
    <property type="entry name" value="Ribosomal_uS8"/>
</dbReference>
<dbReference type="InterPro" id="IPR047863">
    <property type="entry name" value="Ribosomal_uS8_CS"/>
</dbReference>
<dbReference type="InterPro" id="IPR035987">
    <property type="entry name" value="Ribosomal_uS8_sf"/>
</dbReference>
<dbReference type="NCBIfam" id="NF001109">
    <property type="entry name" value="PRK00136.1"/>
    <property type="match status" value="1"/>
</dbReference>
<dbReference type="PANTHER" id="PTHR11758">
    <property type="entry name" value="40S RIBOSOMAL PROTEIN S15A"/>
    <property type="match status" value="1"/>
</dbReference>
<dbReference type="Pfam" id="PF00410">
    <property type="entry name" value="Ribosomal_S8"/>
    <property type="match status" value="1"/>
</dbReference>
<dbReference type="SUPFAM" id="SSF56047">
    <property type="entry name" value="Ribosomal protein S8"/>
    <property type="match status" value="1"/>
</dbReference>
<dbReference type="PROSITE" id="PS00053">
    <property type="entry name" value="RIBOSOMAL_S8"/>
    <property type="match status" value="1"/>
</dbReference>
<comment type="function">
    <text evidence="1">One of the primary rRNA binding proteins, it binds directly to 16S rRNA central domain where it helps coordinate assembly of the platform of the 30S subunit.</text>
</comment>
<comment type="subunit">
    <text>Part of the 30S ribosomal subunit.</text>
</comment>
<comment type="subcellular location">
    <subcellularLocation>
        <location>Plastid</location>
        <location>Chloroplast</location>
    </subcellularLocation>
</comment>
<comment type="similarity">
    <text evidence="2">Belongs to the universal ribosomal protein uS8 family.</text>
</comment>
<organism>
    <name type="scientific">Zygnema circumcarinatum</name>
    <name type="common">Green alga</name>
    <dbReference type="NCBI Taxonomy" id="35869"/>
    <lineage>
        <taxon>Eukaryota</taxon>
        <taxon>Viridiplantae</taxon>
        <taxon>Streptophyta</taxon>
        <taxon>Zygnematophyceae</taxon>
        <taxon>Zygnematophycidae</taxon>
        <taxon>Zygnematales</taxon>
        <taxon>Zygnemataceae</taxon>
        <taxon>Zygnema</taxon>
    </lineage>
</organism>
<protein>
    <recommendedName>
        <fullName evidence="2">Small ribosomal subunit protein uS8c</fullName>
    </recommendedName>
    <alternativeName>
        <fullName>30S ribosomal protein S8, chloroplastic</fullName>
    </alternativeName>
</protein>
<feature type="chain" id="PRO_0000225916" description="Small ribosomal subunit protein uS8c">
    <location>
        <begin position="1"/>
        <end position="132"/>
    </location>
</feature>
<geneLocation type="chloroplast"/>
<reference key="1">
    <citation type="journal article" date="2005" name="BMC Biol.">
        <title>The complete chloroplast DNA sequences of the charophycean green algae Staurastrum and Zygnema reveal that the chloroplast genome underwent extensive changes during the evolution of the Zygnematales.</title>
        <authorList>
            <person name="Turmel M."/>
            <person name="Otis C."/>
            <person name="Lemieux C."/>
        </authorList>
    </citation>
    <scope>NUCLEOTIDE SEQUENCE [LARGE SCALE GENOMIC DNA]</scope>
</reference>
<name>RR8_ZYGCR</name>
<accession>Q32RN2</accession>